<feature type="chain" id="PRO_0000274319" description="Akirin-1">
    <location>
        <begin position="1"/>
        <end position="191"/>
    </location>
</feature>
<feature type="region of interest" description="Disordered" evidence="3">
    <location>
        <begin position="17"/>
        <end position="70"/>
    </location>
</feature>
<feature type="short sequence motif" description="Nuclear localization signal">
    <location>
        <begin position="23"/>
        <end position="28"/>
    </location>
</feature>
<feature type="short sequence motif" description="SYVS motif" evidence="1">
    <location>
        <begin position="188"/>
        <end position="191"/>
    </location>
</feature>
<feature type="compositionally biased region" description="Pro residues" evidence="3">
    <location>
        <begin position="31"/>
        <end position="48"/>
    </location>
</feature>
<feature type="compositionally biased region" description="Polar residues" evidence="3">
    <location>
        <begin position="49"/>
        <end position="59"/>
    </location>
</feature>
<feature type="modified residue" description="Phosphoserine" evidence="13">
    <location>
        <position position="22"/>
    </location>
</feature>
<feature type="modified residue" description="Phosphothreonine" evidence="2">
    <location>
        <position position="71"/>
    </location>
</feature>
<accession>Q99LF1</accession>
<accession>Q9JJB7</accession>
<evidence type="ECO:0000250" key="1">
    <source>
        <dbReference type="UniProtKB" id="Q53H80"/>
    </source>
</evidence>
<evidence type="ECO:0000250" key="2">
    <source>
        <dbReference type="UniProtKB" id="Q9H9L7"/>
    </source>
</evidence>
<evidence type="ECO:0000256" key="3">
    <source>
        <dbReference type="SAM" id="MobiDB-lite"/>
    </source>
</evidence>
<evidence type="ECO:0000269" key="4">
    <source>
    </source>
</evidence>
<evidence type="ECO:0000269" key="5">
    <source>
    </source>
</evidence>
<evidence type="ECO:0000269" key="6">
    <source>
    </source>
</evidence>
<evidence type="ECO:0000269" key="7">
    <source>
    </source>
</evidence>
<evidence type="ECO:0000269" key="8">
    <source>
    </source>
</evidence>
<evidence type="ECO:0000303" key="9">
    <source>
    </source>
</evidence>
<evidence type="ECO:0000303" key="10">
    <source>
    </source>
</evidence>
<evidence type="ECO:0000305" key="11"/>
<evidence type="ECO:0000305" key="12">
    <source>
    </source>
</evidence>
<evidence type="ECO:0007744" key="13">
    <source>
    </source>
</evidence>
<name>AKIR1_MOUSE</name>
<organism>
    <name type="scientific">Mus musculus</name>
    <name type="common">Mouse</name>
    <dbReference type="NCBI Taxonomy" id="10090"/>
    <lineage>
        <taxon>Eukaryota</taxon>
        <taxon>Metazoa</taxon>
        <taxon>Chordata</taxon>
        <taxon>Craniata</taxon>
        <taxon>Vertebrata</taxon>
        <taxon>Euteleostomi</taxon>
        <taxon>Mammalia</taxon>
        <taxon>Eutheria</taxon>
        <taxon>Euarchontoglires</taxon>
        <taxon>Glires</taxon>
        <taxon>Rodentia</taxon>
        <taxon>Myomorpha</taxon>
        <taxon>Muroidea</taxon>
        <taxon>Muridae</taxon>
        <taxon>Murinae</taxon>
        <taxon>Mus</taxon>
        <taxon>Mus</taxon>
    </lineage>
</organism>
<reference key="1">
    <citation type="submission" date="2000-04" db="EMBL/GenBank/DDBJ databases">
        <title>Isolation of full-length cDNA clones from mouse brain cDNA library made by oligo-capping method.</title>
        <authorList>
            <person name="Osada N."/>
            <person name="Kusuda J."/>
            <person name="Tanuma R."/>
            <person name="Ito A."/>
            <person name="Hirata M."/>
            <person name="Sugano S."/>
            <person name="Hashimoto K."/>
        </authorList>
    </citation>
    <scope>NUCLEOTIDE SEQUENCE [LARGE SCALE MRNA]</scope>
    <source>
        <strain>C57BL/6J</strain>
        <tissue>Brain</tissue>
    </source>
</reference>
<reference key="2">
    <citation type="journal article" date="2005" name="Science">
        <title>The transcriptional landscape of the mammalian genome.</title>
        <authorList>
            <person name="Carninci P."/>
            <person name="Kasukawa T."/>
            <person name="Katayama S."/>
            <person name="Gough J."/>
            <person name="Frith M.C."/>
            <person name="Maeda N."/>
            <person name="Oyama R."/>
            <person name="Ravasi T."/>
            <person name="Lenhard B."/>
            <person name="Wells C."/>
            <person name="Kodzius R."/>
            <person name="Shimokawa K."/>
            <person name="Bajic V.B."/>
            <person name="Brenner S.E."/>
            <person name="Batalov S."/>
            <person name="Forrest A.R."/>
            <person name="Zavolan M."/>
            <person name="Davis M.J."/>
            <person name="Wilming L.G."/>
            <person name="Aidinis V."/>
            <person name="Allen J.E."/>
            <person name="Ambesi-Impiombato A."/>
            <person name="Apweiler R."/>
            <person name="Aturaliya R.N."/>
            <person name="Bailey T.L."/>
            <person name="Bansal M."/>
            <person name="Baxter L."/>
            <person name="Beisel K.W."/>
            <person name="Bersano T."/>
            <person name="Bono H."/>
            <person name="Chalk A.M."/>
            <person name="Chiu K.P."/>
            <person name="Choudhary V."/>
            <person name="Christoffels A."/>
            <person name="Clutterbuck D.R."/>
            <person name="Crowe M.L."/>
            <person name="Dalla E."/>
            <person name="Dalrymple B.P."/>
            <person name="de Bono B."/>
            <person name="Della Gatta G."/>
            <person name="di Bernardo D."/>
            <person name="Down T."/>
            <person name="Engstrom P."/>
            <person name="Fagiolini M."/>
            <person name="Faulkner G."/>
            <person name="Fletcher C.F."/>
            <person name="Fukushima T."/>
            <person name="Furuno M."/>
            <person name="Futaki S."/>
            <person name="Gariboldi M."/>
            <person name="Georgii-Hemming P."/>
            <person name="Gingeras T.R."/>
            <person name="Gojobori T."/>
            <person name="Green R.E."/>
            <person name="Gustincich S."/>
            <person name="Harbers M."/>
            <person name="Hayashi Y."/>
            <person name="Hensch T.K."/>
            <person name="Hirokawa N."/>
            <person name="Hill D."/>
            <person name="Huminiecki L."/>
            <person name="Iacono M."/>
            <person name="Ikeo K."/>
            <person name="Iwama A."/>
            <person name="Ishikawa T."/>
            <person name="Jakt M."/>
            <person name="Kanapin A."/>
            <person name="Katoh M."/>
            <person name="Kawasawa Y."/>
            <person name="Kelso J."/>
            <person name="Kitamura H."/>
            <person name="Kitano H."/>
            <person name="Kollias G."/>
            <person name="Krishnan S.P."/>
            <person name="Kruger A."/>
            <person name="Kummerfeld S.K."/>
            <person name="Kurochkin I.V."/>
            <person name="Lareau L.F."/>
            <person name="Lazarevic D."/>
            <person name="Lipovich L."/>
            <person name="Liu J."/>
            <person name="Liuni S."/>
            <person name="McWilliam S."/>
            <person name="Madan Babu M."/>
            <person name="Madera M."/>
            <person name="Marchionni L."/>
            <person name="Matsuda H."/>
            <person name="Matsuzawa S."/>
            <person name="Miki H."/>
            <person name="Mignone F."/>
            <person name="Miyake S."/>
            <person name="Morris K."/>
            <person name="Mottagui-Tabar S."/>
            <person name="Mulder N."/>
            <person name="Nakano N."/>
            <person name="Nakauchi H."/>
            <person name="Ng P."/>
            <person name="Nilsson R."/>
            <person name="Nishiguchi S."/>
            <person name="Nishikawa S."/>
            <person name="Nori F."/>
            <person name="Ohara O."/>
            <person name="Okazaki Y."/>
            <person name="Orlando V."/>
            <person name="Pang K.C."/>
            <person name="Pavan W.J."/>
            <person name="Pavesi G."/>
            <person name="Pesole G."/>
            <person name="Petrovsky N."/>
            <person name="Piazza S."/>
            <person name="Reed J."/>
            <person name="Reid J.F."/>
            <person name="Ring B.Z."/>
            <person name="Ringwald M."/>
            <person name="Rost B."/>
            <person name="Ruan Y."/>
            <person name="Salzberg S.L."/>
            <person name="Sandelin A."/>
            <person name="Schneider C."/>
            <person name="Schoenbach C."/>
            <person name="Sekiguchi K."/>
            <person name="Semple C.A."/>
            <person name="Seno S."/>
            <person name="Sessa L."/>
            <person name="Sheng Y."/>
            <person name="Shibata Y."/>
            <person name="Shimada H."/>
            <person name="Shimada K."/>
            <person name="Silva D."/>
            <person name="Sinclair B."/>
            <person name="Sperling S."/>
            <person name="Stupka E."/>
            <person name="Sugiura K."/>
            <person name="Sultana R."/>
            <person name="Takenaka Y."/>
            <person name="Taki K."/>
            <person name="Tammoja K."/>
            <person name="Tan S.L."/>
            <person name="Tang S."/>
            <person name="Taylor M.S."/>
            <person name="Tegner J."/>
            <person name="Teichmann S.A."/>
            <person name="Ueda H.R."/>
            <person name="van Nimwegen E."/>
            <person name="Verardo R."/>
            <person name="Wei C.L."/>
            <person name="Yagi K."/>
            <person name="Yamanishi H."/>
            <person name="Zabarovsky E."/>
            <person name="Zhu S."/>
            <person name="Zimmer A."/>
            <person name="Hide W."/>
            <person name="Bult C."/>
            <person name="Grimmond S.M."/>
            <person name="Teasdale R.D."/>
            <person name="Liu E.T."/>
            <person name="Brusic V."/>
            <person name="Quackenbush J."/>
            <person name="Wahlestedt C."/>
            <person name="Mattick J.S."/>
            <person name="Hume D.A."/>
            <person name="Kai C."/>
            <person name="Sasaki D."/>
            <person name="Tomaru Y."/>
            <person name="Fukuda S."/>
            <person name="Kanamori-Katayama M."/>
            <person name="Suzuki M."/>
            <person name="Aoki J."/>
            <person name="Arakawa T."/>
            <person name="Iida J."/>
            <person name="Imamura K."/>
            <person name="Itoh M."/>
            <person name="Kato T."/>
            <person name="Kawaji H."/>
            <person name="Kawagashira N."/>
            <person name="Kawashima T."/>
            <person name="Kojima M."/>
            <person name="Kondo S."/>
            <person name="Konno H."/>
            <person name="Nakano K."/>
            <person name="Ninomiya N."/>
            <person name="Nishio T."/>
            <person name="Okada M."/>
            <person name="Plessy C."/>
            <person name="Shibata K."/>
            <person name="Shiraki T."/>
            <person name="Suzuki S."/>
            <person name="Tagami M."/>
            <person name="Waki K."/>
            <person name="Watahiki A."/>
            <person name="Okamura-Oho Y."/>
            <person name="Suzuki H."/>
            <person name="Kawai J."/>
            <person name="Hayashizaki Y."/>
        </authorList>
    </citation>
    <scope>NUCLEOTIDE SEQUENCE [LARGE SCALE MRNA]</scope>
    <source>
        <strain>BALB/cJ</strain>
        <strain>C57BL/6J</strain>
        <tissue>Heart</tissue>
        <tissue>Placenta</tissue>
    </source>
</reference>
<reference key="3">
    <citation type="journal article" date="2004" name="Genome Res.">
        <title>The status, quality, and expansion of the NIH full-length cDNA project: the Mammalian Gene Collection (MGC).</title>
        <authorList>
            <consortium name="The MGC Project Team"/>
        </authorList>
    </citation>
    <scope>NUCLEOTIDE SEQUENCE [LARGE SCALE MRNA]</scope>
    <source>
        <strain>FVB/N</strain>
        <tissue>Mammary tumor</tissue>
    </source>
</reference>
<reference key="4">
    <citation type="journal article" date="2008" name="Exp. Cell Res.">
        <title>Mighty is a novel promyogenic factor in skeletal myogenesis.</title>
        <authorList>
            <person name="Marshall A."/>
            <person name="Salerno M.S."/>
            <person name="Thomas M."/>
            <person name="Davies T."/>
            <person name="Berry C."/>
            <person name="Dyer K."/>
            <person name="Bracegirdle J."/>
            <person name="Watson T."/>
            <person name="Dziadek M."/>
            <person name="Kambadur R."/>
            <person name="Bower R."/>
            <person name="Sharma M."/>
        </authorList>
    </citation>
    <scope>TISSUE SPECIFICITY</scope>
    <scope>INDUCTION</scope>
    <scope>FUNCTION</scope>
</reference>
<reference key="5">
    <citation type="journal article" date="2008" name="Nat. Immunol.">
        <title>Akirins are highly conserved nuclear proteins required for NF-kappaB-dependent gene expression in Drosophila and mice.</title>
        <authorList>
            <person name="Goto A."/>
            <person name="Matsushita K."/>
            <person name="Gesellchen V."/>
            <person name="El Chamy L."/>
            <person name="Kuttenkeuler D."/>
            <person name="Takeuchi O."/>
            <person name="Hoffmann J.A."/>
            <person name="Akira S."/>
            <person name="Boutros M."/>
            <person name="Reichhart J.-M."/>
        </authorList>
    </citation>
    <scope>DISRUPTION PHENOTYPE</scope>
</reference>
<reference key="6">
    <citation type="journal article" date="2008" name="Nat. Immunol.">
        <authorList>
            <person name="Goto A."/>
            <person name="Matsushita K."/>
            <person name="Gesellchen V."/>
            <person name="El Chamy L."/>
            <person name="Kuttenkeuler D."/>
            <person name="Takeuchi O."/>
            <person name="Hoffmann J.A."/>
            <person name="Akira S."/>
            <person name="Boutros M."/>
            <person name="Reichhart J.-M."/>
        </authorList>
    </citation>
    <scope>ERRATUM OF PUBMED:18066067</scope>
</reference>
<reference key="7">
    <citation type="journal article" date="2009" name="Exp. Cell Res.">
        <title>Akirin1 (Mighty), a novel promyogenic factor regulates muscle regeneration and cell chemotaxis.</title>
        <authorList>
            <person name="Salerno M.S."/>
            <person name="Dyer K."/>
            <person name="Bracegirdle J."/>
            <person name="Platt L."/>
            <person name="Thomas M."/>
            <person name="Siriett V."/>
            <person name="Kambadur R."/>
            <person name="Sharma M."/>
        </authorList>
    </citation>
    <scope>INDUCTION</scope>
    <scope>TISSUE SPECIFICITY</scope>
    <scope>FUNCTION</scope>
</reference>
<reference key="8">
    <citation type="journal article" date="2010" name="Cell">
        <title>A tissue-specific atlas of mouse protein phosphorylation and expression.</title>
        <authorList>
            <person name="Huttlin E.L."/>
            <person name="Jedrychowski M.P."/>
            <person name="Elias J.E."/>
            <person name="Goswami T."/>
            <person name="Rad R."/>
            <person name="Beausoleil S.A."/>
            <person name="Villen J."/>
            <person name="Haas W."/>
            <person name="Sowa M.E."/>
            <person name="Gygi S.P."/>
        </authorList>
    </citation>
    <scope>PHOSPHORYLATION [LARGE SCALE ANALYSIS] AT SER-22</scope>
    <scope>IDENTIFICATION BY MASS SPECTROMETRY [LARGE SCALE ANALYSIS]</scope>
    <source>
        <tissue>Kidney</tissue>
    </source>
</reference>
<reference key="9">
    <citation type="journal article" date="2013" name="PLoS ONE">
        <title>Myostatin suppression of Akirin1 mediates glucocorticoid-induced satellite cell dysfunction.</title>
        <authorList>
            <person name="Dong Y."/>
            <person name="Pan J.S."/>
            <person name="Zhang L."/>
        </authorList>
    </citation>
    <scope>INDUCTION</scope>
</reference>
<reference key="10">
    <citation type="journal article" date="2019" name="J. Cell. Biochem.">
        <title>Role of Akirin1 in the regulation of skeletal muscle fiber-type switch.</title>
        <authorList>
            <person name="Rao V.V."/>
            <person name="Sangiah U."/>
            <person name="Mary K.A."/>
            <person name="Akira S."/>
            <person name="Mohanty A."/>
        </authorList>
    </citation>
    <scope>FUNCTION</scope>
</reference>
<keyword id="KW-0539">Nucleus</keyword>
<keyword id="KW-0597">Phosphoprotein</keyword>
<keyword id="KW-1185">Reference proteome</keyword>
<proteinExistence type="evidence at protein level"/>
<comment type="function">
    <text evidence="2 5 6 8">Molecular adapter that acts as a bridge between proteins, and which is involved skeletal muscle development (PubMed:18255059, PubMed:19406121, PubMed:30746755). Functions as a signal transducer for MSTN during skeletal muscle regeneration and myogenesis (PubMed:18255059, PubMed:19406121). May regulate chemotaxis of both macrophages and myoblasts by reorganising actin cytoskeleton, leading to more efficient lamellipodia formation via a PI3 kinase dependent pathway (PubMed:19406121). In contrast to AKIRIN2, not involved in nuclear import of proteasomes (By similarity).</text>
</comment>
<comment type="subcellular location">
    <subcellularLocation>
        <location evidence="2">Nucleus</location>
    </subcellularLocation>
</comment>
<comment type="tissue specificity">
    <text evidence="5 6">Expressed in macrophages and satellite cells.</text>
</comment>
<comment type="induction">
    <text evidence="5 6 7">Up-regulated in activated satellite cells and in the regenerating muscle (PubMed:19406121). Down-regulated by MSTN in skeletal muscle (PubMed:18255059, PubMed:19406121, PubMed:23516508). Down-regulated by dexamethasone by a MSTN (PubMed:23516508).</text>
</comment>
<comment type="disruption phenotype">
    <text evidence="4">Mice grow normally and do not display gross developmental abnormalities (PubMed:18066067). Embryonic fibroblasts obtained from null mutant mice do not express Akirin1 (PubMed:18066067).</text>
</comment>
<comment type="miscellaneous">
    <text evidence="12">'Akiraka ni suru' means 'making things clear' in Japanese. The name is given based on the presence of the clear nuclear localization signal.</text>
</comment>
<comment type="similarity">
    <text evidence="11">Belongs to the akirin family.</text>
</comment>
<comment type="sequence caution" evidence="11">
    <conflict type="erroneous initiation">
        <sequence resource="EMBL-CDS" id="BAA95077"/>
    </conflict>
</comment>
<protein>
    <recommendedName>
        <fullName evidence="11">Akirin-1</fullName>
    </recommendedName>
    <alternativeName>
        <fullName evidence="10">protein mighty</fullName>
    </alternativeName>
</protein>
<dbReference type="EMBL" id="AB041594">
    <property type="protein sequence ID" value="BAA95077.1"/>
    <property type="status" value="ALT_INIT"/>
    <property type="molecule type" value="mRNA"/>
</dbReference>
<dbReference type="EMBL" id="AK146017">
    <property type="protein sequence ID" value="BAE26835.1"/>
    <property type="molecule type" value="mRNA"/>
</dbReference>
<dbReference type="EMBL" id="AK159632">
    <property type="protein sequence ID" value="BAE35246.1"/>
    <property type="molecule type" value="mRNA"/>
</dbReference>
<dbReference type="EMBL" id="AK160087">
    <property type="protein sequence ID" value="BAE35618.1"/>
    <property type="molecule type" value="mRNA"/>
</dbReference>
<dbReference type="EMBL" id="AK168201">
    <property type="protein sequence ID" value="BAE40161.1"/>
    <property type="molecule type" value="mRNA"/>
</dbReference>
<dbReference type="EMBL" id="AK168214">
    <property type="protein sequence ID" value="BAE40172.1"/>
    <property type="molecule type" value="mRNA"/>
</dbReference>
<dbReference type="EMBL" id="AK168530">
    <property type="protein sequence ID" value="BAE40408.1"/>
    <property type="molecule type" value="mRNA"/>
</dbReference>
<dbReference type="EMBL" id="BC003291">
    <property type="protein sequence ID" value="AAH03291.1"/>
    <property type="molecule type" value="mRNA"/>
</dbReference>
<dbReference type="CCDS" id="CCDS18619.1"/>
<dbReference type="RefSeq" id="NP_075912.2">
    <property type="nucleotide sequence ID" value="NM_023423.3"/>
</dbReference>
<dbReference type="SMR" id="Q99LF1"/>
<dbReference type="FunCoup" id="Q99LF1">
    <property type="interactions" value="4992"/>
</dbReference>
<dbReference type="STRING" id="10090.ENSMUSP00000099696"/>
<dbReference type="GlyGen" id="Q99LF1">
    <property type="glycosylation" value="1 site"/>
</dbReference>
<dbReference type="iPTMnet" id="Q99LF1"/>
<dbReference type="PhosphoSitePlus" id="Q99LF1"/>
<dbReference type="jPOST" id="Q99LF1"/>
<dbReference type="PaxDb" id="10090-ENSMUSP00000099696"/>
<dbReference type="PeptideAtlas" id="Q99LF1"/>
<dbReference type="ProteomicsDB" id="282065"/>
<dbReference type="Antibodypedia" id="31846">
    <property type="antibodies" value="125 antibodies from 21 providers"/>
</dbReference>
<dbReference type="DNASU" id="68050"/>
<dbReference type="Ensembl" id="ENSMUST00000102636.4">
    <property type="protein sequence ID" value="ENSMUSP00000099696.4"/>
    <property type="gene ID" value="ENSMUSG00000023075.10"/>
</dbReference>
<dbReference type="GeneID" id="68050"/>
<dbReference type="KEGG" id="mmu:68050"/>
<dbReference type="UCSC" id="uc008upv.1">
    <property type="organism name" value="mouse"/>
</dbReference>
<dbReference type="AGR" id="MGI:1915300"/>
<dbReference type="CTD" id="79647"/>
<dbReference type="MGI" id="MGI:1915300">
    <property type="gene designation" value="Akirin1"/>
</dbReference>
<dbReference type="VEuPathDB" id="HostDB:ENSMUSG00000023075"/>
<dbReference type="eggNOG" id="KOG4330">
    <property type="taxonomic scope" value="Eukaryota"/>
</dbReference>
<dbReference type="GeneTree" id="ENSGT00940000158787"/>
<dbReference type="HOGENOM" id="CLU_119227_0_0_1"/>
<dbReference type="InParanoid" id="Q99LF1"/>
<dbReference type="OMA" id="PMGGEHR"/>
<dbReference type="OrthoDB" id="10039914at2759"/>
<dbReference type="PhylomeDB" id="Q99LF1"/>
<dbReference type="TreeFam" id="TF317123"/>
<dbReference type="BioGRID-ORCS" id="68050">
    <property type="hits" value="2 hits in 76 CRISPR screens"/>
</dbReference>
<dbReference type="ChiTaRS" id="Akirin1">
    <property type="organism name" value="mouse"/>
</dbReference>
<dbReference type="PRO" id="PR:Q99LF1"/>
<dbReference type="Proteomes" id="UP000000589">
    <property type="component" value="Chromosome 4"/>
</dbReference>
<dbReference type="RNAct" id="Q99LF1">
    <property type="molecule type" value="protein"/>
</dbReference>
<dbReference type="Bgee" id="ENSMUSG00000023075">
    <property type="expression patterns" value="Expressed in lens of camera-type eye and 111 other cell types or tissues"/>
</dbReference>
<dbReference type="GO" id="GO:0031965">
    <property type="term" value="C:nuclear membrane"/>
    <property type="evidence" value="ECO:0007669"/>
    <property type="project" value="Ensembl"/>
</dbReference>
<dbReference type="GO" id="GO:0005654">
    <property type="term" value="C:nucleoplasm"/>
    <property type="evidence" value="ECO:0007669"/>
    <property type="project" value="Ensembl"/>
</dbReference>
<dbReference type="GO" id="GO:0005634">
    <property type="term" value="C:nucleus"/>
    <property type="evidence" value="ECO:0000250"/>
    <property type="project" value="UniProtKB"/>
</dbReference>
<dbReference type="GO" id="GO:0014839">
    <property type="term" value="P:myoblast migration involved in skeletal muscle regeneration"/>
    <property type="evidence" value="ECO:0000315"/>
    <property type="project" value="UniProtKB"/>
</dbReference>
<dbReference type="GO" id="GO:1902725">
    <property type="term" value="P:negative regulation of satellite cell differentiation"/>
    <property type="evidence" value="ECO:0000315"/>
    <property type="project" value="UniProtKB"/>
</dbReference>
<dbReference type="GO" id="GO:1902723">
    <property type="term" value="P:negative regulation of skeletal muscle satellite cell proliferation"/>
    <property type="evidence" value="ECO:0000315"/>
    <property type="project" value="UniProtKB"/>
</dbReference>
<dbReference type="GO" id="GO:0010592">
    <property type="term" value="P:positive regulation of lamellipodium assembly"/>
    <property type="evidence" value="ECO:0000315"/>
    <property type="project" value="UniProtKB"/>
</dbReference>
<dbReference type="GO" id="GO:0010759">
    <property type="term" value="P:positive regulation of macrophage chemotaxis"/>
    <property type="evidence" value="ECO:0000315"/>
    <property type="project" value="UniProtKB"/>
</dbReference>
<dbReference type="GO" id="GO:0045663">
    <property type="term" value="P:positive regulation of myoblast differentiation"/>
    <property type="evidence" value="ECO:0000315"/>
    <property type="project" value="UniProtKB"/>
</dbReference>
<dbReference type="GO" id="GO:0045944">
    <property type="term" value="P:positive regulation of transcription by RNA polymerase II"/>
    <property type="evidence" value="ECO:0000315"/>
    <property type="project" value="UniProtKB"/>
</dbReference>
<dbReference type="CDD" id="cd22243">
    <property type="entry name" value="akirin-1"/>
    <property type="match status" value="1"/>
</dbReference>
<dbReference type="InterPro" id="IPR024132">
    <property type="entry name" value="Akirin"/>
</dbReference>
<dbReference type="PANTHER" id="PTHR13293:SF9">
    <property type="entry name" value="AKIRIN-1"/>
    <property type="match status" value="1"/>
</dbReference>
<dbReference type="PANTHER" id="PTHR13293">
    <property type="entry name" value="AKIRIN-RELATED"/>
    <property type="match status" value="1"/>
</dbReference>
<gene>
    <name evidence="9" type="primary">Akirin1</name>
    <name evidence="10" type="synonym">Mighty</name>
    <name type="ORF">MNCb-2831</name>
</gene>
<sequence length="191" mass="21676">MACGATLKRPMEFEAALLSPGSPKRRRCAPLPGPTPGLRPPDAEPPPLQMQTPPASLQQPAPPGSERRLPTPEQIFQNIKQEYNRYQRWRHLEVVLSQSEACTSETQPSSSALTAPGSPGAFWMKKDQPTFTLRQVGIICERLLKDYEDKVREEYEQILSTKLAEQYESFVKFTHDQIMRRYGTRPTSYVS</sequence>